<reference key="1">
    <citation type="journal article" date="1988" name="Peptides">
        <title>Cholecystokinin octapeptide purified from brains of Australian marsupials.</title>
        <authorList>
            <person name="Fan Z.W."/>
            <person name="Eng J."/>
            <person name="Shaw G."/>
            <person name="Yalow R.S."/>
        </authorList>
    </citation>
    <scope>PROTEIN SEQUENCE</scope>
    <scope>SULFATION AT TYR-2</scope>
    <scope>AMIDATION AT PHE-8</scope>
    <source>
        <tissue>Brain</tissue>
    </source>
</reference>
<evidence type="ECO:0000250" key="1">
    <source>
        <dbReference type="UniProtKB" id="Q9TS44"/>
    </source>
</evidence>
<evidence type="ECO:0000269" key="2">
    <source>
    </source>
</evidence>
<evidence type="ECO:0000305" key="3"/>
<proteinExistence type="evidence at protein level"/>
<sequence>DYMGWMDF</sequence>
<name>CCKN_DASVI</name>
<organism>
    <name type="scientific">Dasyurus viverrinus</name>
    <name type="common">Eastern quoll</name>
    <name type="synonym">Didelphis viverrina</name>
    <dbReference type="NCBI Taxonomy" id="9279"/>
    <lineage>
        <taxon>Eukaryota</taxon>
        <taxon>Metazoa</taxon>
        <taxon>Chordata</taxon>
        <taxon>Craniata</taxon>
        <taxon>Vertebrata</taxon>
        <taxon>Euteleostomi</taxon>
        <taxon>Mammalia</taxon>
        <taxon>Metatheria</taxon>
        <taxon>Dasyuromorphia</taxon>
        <taxon>Dasyuridae</taxon>
        <taxon>Dasyurus</taxon>
    </lineage>
</organism>
<dbReference type="PIR" id="PQ0012">
    <property type="entry name" value="PQ0012"/>
</dbReference>
<dbReference type="GO" id="GO:0005576">
    <property type="term" value="C:extracellular region"/>
    <property type="evidence" value="ECO:0007669"/>
    <property type="project" value="UniProtKB-SubCell"/>
</dbReference>
<dbReference type="GO" id="GO:0005179">
    <property type="term" value="F:hormone activity"/>
    <property type="evidence" value="ECO:0007669"/>
    <property type="project" value="UniProtKB-KW"/>
</dbReference>
<dbReference type="InterPro" id="IPR013152">
    <property type="entry name" value="Gastrin/cholecystokinin_CS"/>
</dbReference>
<dbReference type="PROSITE" id="PS00259">
    <property type="entry name" value="GASTRIN"/>
    <property type="match status" value="1"/>
</dbReference>
<gene>
    <name type="primary">CCK</name>
</gene>
<comment type="function">
    <text evidence="1">This peptide hormone induces gall bladder contraction and the release of pancreatic enzymes in the gut. Its function in the brain is not clear. Binding to CCK-A receptors stimulates amylase release from the pancreas, binding to CCK-B receptors stimulates gastric acid secretion.</text>
</comment>
<comment type="subunit">
    <text evidence="1">Binds to CCK-A receptors in the pancreas and CCK-B receptors in the brain.</text>
</comment>
<comment type="subcellular location">
    <subcellularLocation>
        <location>Secreted</location>
    </subcellularLocation>
</comment>
<comment type="similarity">
    <text evidence="3">Belongs to the gastrin/cholecystokinin family.</text>
</comment>
<keyword id="KW-0027">Amidation</keyword>
<keyword id="KW-0903">Direct protein sequencing</keyword>
<keyword id="KW-0372">Hormone</keyword>
<keyword id="KW-0964">Secreted</keyword>
<keyword id="KW-0765">Sulfation</keyword>
<feature type="peptide" id="PRO_0000043888" description="Cholecystokinin">
    <location>
        <begin position="1"/>
        <end position="8"/>
    </location>
</feature>
<feature type="modified residue" description="Sulfotyrosine" evidence="2">
    <location>
        <position position="2"/>
    </location>
</feature>
<feature type="modified residue" description="Phenylalanine amide" evidence="2">
    <location>
        <position position="8"/>
    </location>
</feature>
<protein>
    <recommendedName>
        <fullName>Cholecystokinin</fullName>
        <shortName>CCK</shortName>
    </recommendedName>
</protein>
<accession>P68125</accession>
<accession>P30369</accession>